<reference key="1">
    <citation type="journal article" date="2011" name="MBio">
        <title>Novel metabolic attributes of the genus Cyanothece, comprising a group of unicellular nitrogen-fixing Cyanobacteria.</title>
        <authorList>
            <person name="Bandyopadhyay A."/>
            <person name="Elvitigala T."/>
            <person name="Welsh E."/>
            <person name="Stockel J."/>
            <person name="Liberton M."/>
            <person name="Min H."/>
            <person name="Sherman L.A."/>
            <person name="Pakrasi H.B."/>
        </authorList>
    </citation>
    <scope>NUCLEOTIDE SEQUENCE [LARGE SCALE GENOMIC DNA]</scope>
    <source>
        <strain>PCC 7424</strain>
    </source>
</reference>
<evidence type="ECO:0000255" key="1">
    <source>
        <dbReference type="HAMAP-Rule" id="MF_00688"/>
    </source>
</evidence>
<accession>B7K8N3</accession>
<sequence length="191" mass="21893">MIWDTDSIIQAYAQGYFLMSDEEGTLGWYTSSQRTLIPLDDRFRYPKSLQRVLNQERFTVAINRDFPAVCWGCANRETTWISHELIEIYLQLNQAGWAFSFETWQGNQLAGGILGIAIRGAFIGESMFYNIPDGSKVAMVKLVEHLRARGFVLFDAQLQNPHLARFGSYGISDREYKLLLRKALSSKCHLI</sequence>
<comment type="function">
    <text evidence="1">Functions in the N-end rule pathway of protein degradation where it conjugates Leu, Phe and, less efficiently, Met from aminoacyl-tRNAs to the N-termini of proteins containing an N-terminal arginine or lysine.</text>
</comment>
<comment type="catalytic activity">
    <reaction evidence="1">
        <text>N-terminal L-lysyl-[protein] + L-leucyl-tRNA(Leu) = N-terminal L-leucyl-L-lysyl-[protein] + tRNA(Leu) + H(+)</text>
        <dbReference type="Rhea" id="RHEA:12340"/>
        <dbReference type="Rhea" id="RHEA-COMP:9613"/>
        <dbReference type="Rhea" id="RHEA-COMP:9622"/>
        <dbReference type="Rhea" id="RHEA-COMP:12670"/>
        <dbReference type="Rhea" id="RHEA-COMP:12671"/>
        <dbReference type="ChEBI" id="CHEBI:15378"/>
        <dbReference type="ChEBI" id="CHEBI:65249"/>
        <dbReference type="ChEBI" id="CHEBI:78442"/>
        <dbReference type="ChEBI" id="CHEBI:78494"/>
        <dbReference type="ChEBI" id="CHEBI:133043"/>
        <dbReference type="EC" id="2.3.2.6"/>
    </reaction>
</comment>
<comment type="catalytic activity">
    <reaction evidence="1">
        <text>N-terminal L-arginyl-[protein] + L-leucyl-tRNA(Leu) = N-terminal L-leucyl-L-arginyl-[protein] + tRNA(Leu) + H(+)</text>
        <dbReference type="Rhea" id="RHEA:50416"/>
        <dbReference type="Rhea" id="RHEA-COMP:9613"/>
        <dbReference type="Rhea" id="RHEA-COMP:9622"/>
        <dbReference type="Rhea" id="RHEA-COMP:12672"/>
        <dbReference type="Rhea" id="RHEA-COMP:12673"/>
        <dbReference type="ChEBI" id="CHEBI:15378"/>
        <dbReference type="ChEBI" id="CHEBI:64719"/>
        <dbReference type="ChEBI" id="CHEBI:78442"/>
        <dbReference type="ChEBI" id="CHEBI:78494"/>
        <dbReference type="ChEBI" id="CHEBI:133044"/>
        <dbReference type="EC" id="2.3.2.6"/>
    </reaction>
</comment>
<comment type="catalytic activity">
    <reaction evidence="1">
        <text>L-phenylalanyl-tRNA(Phe) + an N-terminal L-alpha-aminoacyl-[protein] = an N-terminal L-phenylalanyl-L-alpha-aminoacyl-[protein] + tRNA(Phe)</text>
        <dbReference type="Rhea" id="RHEA:43632"/>
        <dbReference type="Rhea" id="RHEA-COMP:9668"/>
        <dbReference type="Rhea" id="RHEA-COMP:9699"/>
        <dbReference type="Rhea" id="RHEA-COMP:10636"/>
        <dbReference type="Rhea" id="RHEA-COMP:10637"/>
        <dbReference type="ChEBI" id="CHEBI:78442"/>
        <dbReference type="ChEBI" id="CHEBI:78531"/>
        <dbReference type="ChEBI" id="CHEBI:78597"/>
        <dbReference type="ChEBI" id="CHEBI:83561"/>
        <dbReference type="EC" id="2.3.2.6"/>
    </reaction>
</comment>
<comment type="subcellular location">
    <subcellularLocation>
        <location evidence="1">Cytoplasm</location>
    </subcellularLocation>
</comment>
<comment type="similarity">
    <text evidence="1">Belongs to the L/F-transferase family.</text>
</comment>
<gene>
    <name evidence="1" type="primary">aat</name>
    <name type="ordered locus">PCC7424_2824</name>
</gene>
<protein>
    <recommendedName>
        <fullName evidence="1">Leucyl/phenylalanyl-tRNA--protein transferase</fullName>
        <ecNumber evidence="1">2.3.2.6</ecNumber>
    </recommendedName>
    <alternativeName>
        <fullName evidence="1">L/F-transferase</fullName>
    </alternativeName>
    <alternativeName>
        <fullName evidence="1">Leucyltransferase</fullName>
    </alternativeName>
    <alternativeName>
        <fullName evidence="1">Phenyalanyltransferase</fullName>
    </alternativeName>
</protein>
<name>LFTR_GLOC7</name>
<keyword id="KW-0012">Acyltransferase</keyword>
<keyword id="KW-0963">Cytoplasm</keyword>
<keyword id="KW-1185">Reference proteome</keyword>
<keyword id="KW-0808">Transferase</keyword>
<feature type="chain" id="PRO_1000131916" description="Leucyl/phenylalanyl-tRNA--protein transferase">
    <location>
        <begin position="1"/>
        <end position="191"/>
    </location>
</feature>
<dbReference type="EC" id="2.3.2.6" evidence="1"/>
<dbReference type="EMBL" id="CP001291">
    <property type="protein sequence ID" value="ACK71231.1"/>
    <property type="molecule type" value="Genomic_DNA"/>
</dbReference>
<dbReference type="RefSeq" id="WP_015954831.1">
    <property type="nucleotide sequence ID" value="NC_011729.1"/>
</dbReference>
<dbReference type="SMR" id="B7K8N3"/>
<dbReference type="STRING" id="65393.PCC7424_2824"/>
<dbReference type="KEGG" id="cyc:PCC7424_2824"/>
<dbReference type="eggNOG" id="COG2360">
    <property type="taxonomic scope" value="Bacteria"/>
</dbReference>
<dbReference type="HOGENOM" id="CLU_075045_1_1_3"/>
<dbReference type="OrthoDB" id="9790282at2"/>
<dbReference type="Proteomes" id="UP000002384">
    <property type="component" value="Chromosome"/>
</dbReference>
<dbReference type="GO" id="GO:0005737">
    <property type="term" value="C:cytoplasm"/>
    <property type="evidence" value="ECO:0007669"/>
    <property type="project" value="UniProtKB-SubCell"/>
</dbReference>
<dbReference type="GO" id="GO:0008914">
    <property type="term" value="F:leucyl-tRNA--protein transferase activity"/>
    <property type="evidence" value="ECO:0007669"/>
    <property type="project" value="UniProtKB-UniRule"/>
</dbReference>
<dbReference type="GO" id="GO:0030163">
    <property type="term" value="P:protein catabolic process"/>
    <property type="evidence" value="ECO:0007669"/>
    <property type="project" value="UniProtKB-UniRule"/>
</dbReference>
<dbReference type="Gene3D" id="3.40.630.70">
    <property type="entry name" value="Leucyl/phenylalanyl-tRNA-protein transferase, C-terminal domain"/>
    <property type="match status" value="1"/>
</dbReference>
<dbReference type="HAMAP" id="MF_00688">
    <property type="entry name" value="Leu_Phe_trans"/>
    <property type="match status" value="1"/>
</dbReference>
<dbReference type="InterPro" id="IPR016181">
    <property type="entry name" value="Acyl_CoA_acyltransferase"/>
</dbReference>
<dbReference type="InterPro" id="IPR004616">
    <property type="entry name" value="Leu/Phe-tRNA_Trfase"/>
</dbReference>
<dbReference type="InterPro" id="IPR042203">
    <property type="entry name" value="Leu/Phe-tRNA_Trfase_C"/>
</dbReference>
<dbReference type="NCBIfam" id="TIGR00667">
    <property type="entry name" value="aat"/>
    <property type="match status" value="1"/>
</dbReference>
<dbReference type="PANTHER" id="PTHR30098">
    <property type="entry name" value="LEUCYL/PHENYLALANYL-TRNA--PROTEIN TRANSFERASE"/>
    <property type="match status" value="1"/>
</dbReference>
<dbReference type="PANTHER" id="PTHR30098:SF2">
    <property type="entry name" value="LEUCYL_PHENYLALANYL-TRNA--PROTEIN TRANSFERASE"/>
    <property type="match status" value="1"/>
</dbReference>
<dbReference type="Pfam" id="PF03588">
    <property type="entry name" value="Leu_Phe_trans"/>
    <property type="match status" value="1"/>
</dbReference>
<dbReference type="SUPFAM" id="SSF55729">
    <property type="entry name" value="Acyl-CoA N-acyltransferases (Nat)"/>
    <property type="match status" value="1"/>
</dbReference>
<organism>
    <name type="scientific">Gloeothece citriformis (strain PCC 7424)</name>
    <name type="common">Cyanothece sp. (strain PCC 7424)</name>
    <dbReference type="NCBI Taxonomy" id="65393"/>
    <lineage>
        <taxon>Bacteria</taxon>
        <taxon>Bacillati</taxon>
        <taxon>Cyanobacteriota</taxon>
        <taxon>Cyanophyceae</taxon>
        <taxon>Oscillatoriophycideae</taxon>
        <taxon>Chroococcales</taxon>
        <taxon>Aphanothecaceae</taxon>
        <taxon>Gloeothece</taxon>
        <taxon>Gloeothece citriformis</taxon>
    </lineage>
</organism>
<proteinExistence type="inferred from homology"/>